<comment type="function">
    <text evidence="1">Part of the ABC transporter complex MglABC involved in galactose/methyl galactoside import. Responsible for energy coupling to the transport system.</text>
</comment>
<comment type="catalytic activity">
    <reaction evidence="1">
        <text>D-galactose(out) + ATP + H2O = D-galactose(in) + ADP + phosphate + H(+)</text>
        <dbReference type="Rhea" id="RHEA:60156"/>
        <dbReference type="ChEBI" id="CHEBI:4139"/>
        <dbReference type="ChEBI" id="CHEBI:15377"/>
        <dbReference type="ChEBI" id="CHEBI:15378"/>
        <dbReference type="ChEBI" id="CHEBI:30616"/>
        <dbReference type="ChEBI" id="CHEBI:43474"/>
        <dbReference type="ChEBI" id="CHEBI:456216"/>
        <dbReference type="EC" id="7.5.2.11"/>
    </reaction>
    <physiologicalReaction direction="left-to-right" evidence="1">
        <dbReference type="Rhea" id="RHEA:60157"/>
    </physiologicalReaction>
</comment>
<comment type="catalytic activity">
    <reaction evidence="1">
        <text>methyl beta-D-galactoside(out) + ATP + H2O = methyl beta-D-galactoside(in) + ADP + phosphate + H(+)</text>
        <dbReference type="Rhea" id="RHEA:72531"/>
        <dbReference type="ChEBI" id="CHEBI:15377"/>
        <dbReference type="ChEBI" id="CHEBI:15378"/>
        <dbReference type="ChEBI" id="CHEBI:17540"/>
        <dbReference type="ChEBI" id="CHEBI:30616"/>
        <dbReference type="ChEBI" id="CHEBI:43474"/>
        <dbReference type="ChEBI" id="CHEBI:456216"/>
    </reaction>
    <physiologicalReaction direction="left-to-right" evidence="1">
        <dbReference type="Rhea" id="RHEA:72532"/>
    </physiologicalReaction>
</comment>
<comment type="subunit">
    <text evidence="1">The complex is composed of one ATP-binding protein (MglA), two transmembrane proteins (MglC) and a solute-binding protein (MglB).</text>
</comment>
<comment type="subcellular location">
    <subcellularLocation>
        <location evidence="1">Cell inner membrane</location>
        <topology evidence="1">Peripheral membrane protein</topology>
    </subcellularLocation>
</comment>
<comment type="similarity">
    <text evidence="1">Belongs to the ABC transporter superfamily. Galactose/methyl galactoside importer (TC 3.A.1.2.3) family.</text>
</comment>
<feature type="chain" id="PRO_0000261382" description="Galactose/methyl galactoside import ATP-binding protein MglA">
    <location>
        <begin position="1"/>
        <end position="506"/>
    </location>
</feature>
<feature type="domain" description="ABC transporter 1" evidence="1">
    <location>
        <begin position="14"/>
        <end position="249"/>
    </location>
</feature>
<feature type="domain" description="ABC transporter 2" evidence="1">
    <location>
        <begin position="264"/>
        <end position="506"/>
    </location>
</feature>
<feature type="binding site" evidence="1">
    <location>
        <begin position="46"/>
        <end position="53"/>
    </location>
    <ligand>
        <name>ATP</name>
        <dbReference type="ChEBI" id="CHEBI:30616"/>
    </ligand>
</feature>
<evidence type="ECO:0000255" key="1">
    <source>
        <dbReference type="HAMAP-Rule" id="MF_01717"/>
    </source>
</evidence>
<organism>
    <name type="scientific">Yersinia pestis bv. Antiqua (strain Nepal516)</name>
    <dbReference type="NCBI Taxonomy" id="377628"/>
    <lineage>
        <taxon>Bacteria</taxon>
        <taxon>Pseudomonadati</taxon>
        <taxon>Pseudomonadota</taxon>
        <taxon>Gammaproteobacteria</taxon>
        <taxon>Enterobacterales</taxon>
        <taxon>Yersiniaceae</taxon>
        <taxon>Yersinia</taxon>
    </lineage>
</organism>
<dbReference type="EC" id="7.5.2.11" evidence="1"/>
<dbReference type="EMBL" id="CP000305">
    <property type="protein sequence ID" value="ABG18799.1"/>
    <property type="molecule type" value="Genomic_DNA"/>
</dbReference>
<dbReference type="EMBL" id="ACNQ01000014">
    <property type="protein sequence ID" value="EEO76037.1"/>
    <property type="molecule type" value="Genomic_DNA"/>
</dbReference>
<dbReference type="RefSeq" id="WP_002211964.1">
    <property type="nucleotide sequence ID" value="NZ_ACNQ01000014.1"/>
</dbReference>
<dbReference type="SMR" id="Q1CGT1"/>
<dbReference type="GeneID" id="57977060"/>
<dbReference type="KEGG" id="ypn:YPN_2471"/>
<dbReference type="HOGENOM" id="CLU_000604_92_3_6"/>
<dbReference type="Proteomes" id="UP000008936">
    <property type="component" value="Chromosome"/>
</dbReference>
<dbReference type="GO" id="GO:0005886">
    <property type="term" value="C:plasma membrane"/>
    <property type="evidence" value="ECO:0007669"/>
    <property type="project" value="UniProtKB-SubCell"/>
</dbReference>
<dbReference type="GO" id="GO:0005524">
    <property type="term" value="F:ATP binding"/>
    <property type="evidence" value="ECO:0007669"/>
    <property type="project" value="UniProtKB-KW"/>
</dbReference>
<dbReference type="GO" id="GO:0016887">
    <property type="term" value="F:ATP hydrolysis activity"/>
    <property type="evidence" value="ECO:0007669"/>
    <property type="project" value="InterPro"/>
</dbReference>
<dbReference type="CDD" id="cd03216">
    <property type="entry name" value="ABC_Carb_Monos_I"/>
    <property type="match status" value="1"/>
</dbReference>
<dbReference type="CDD" id="cd03215">
    <property type="entry name" value="ABC_Carb_Monos_II"/>
    <property type="match status" value="1"/>
</dbReference>
<dbReference type="FunFam" id="3.40.50.300:FF:000126">
    <property type="entry name" value="Galactose/methyl galactoside import ATP-binding protein MglA"/>
    <property type="match status" value="1"/>
</dbReference>
<dbReference type="FunFam" id="3.40.50.300:FF:000127">
    <property type="entry name" value="Ribose import ATP-binding protein RbsA"/>
    <property type="match status" value="1"/>
</dbReference>
<dbReference type="Gene3D" id="3.40.50.300">
    <property type="entry name" value="P-loop containing nucleotide triphosphate hydrolases"/>
    <property type="match status" value="2"/>
</dbReference>
<dbReference type="InterPro" id="IPR003593">
    <property type="entry name" value="AAA+_ATPase"/>
</dbReference>
<dbReference type="InterPro" id="IPR050107">
    <property type="entry name" value="ABC_carbohydrate_import_ATPase"/>
</dbReference>
<dbReference type="InterPro" id="IPR003439">
    <property type="entry name" value="ABC_transporter-like_ATP-bd"/>
</dbReference>
<dbReference type="InterPro" id="IPR017871">
    <property type="entry name" value="ABC_transporter-like_CS"/>
</dbReference>
<dbReference type="InterPro" id="IPR027417">
    <property type="entry name" value="P-loop_NTPase"/>
</dbReference>
<dbReference type="NCBIfam" id="NF008215">
    <property type="entry name" value="PRK10982.1"/>
    <property type="match status" value="1"/>
</dbReference>
<dbReference type="PANTHER" id="PTHR43790">
    <property type="entry name" value="CARBOHYDRATE TRANSPORT ATP-BINDING PROTEIN MG119-RELATED"/>
    <property type="match status" value="1"/>
</dbReference>
<dbReference type="PANTHER" id="PTHR43790:SF7">
    <property type="entry name" value="GALACTOSE_METHYL GALACTOSIDE IMPORT ATP-BINDING PROTEIN MGLA"/>
    <property type="match status" value="1"/>
</dbReference>
<dbReference type="Pfam" id="PF00005">
    <property type="entry name" value="ABC_tran"/>
    <property type="match status" value="2"/>
</dbReference>
<dbReference type="SMART" id="SM00382">
    <property type="entry name" value="AAA"/>
    <property type="match status" value="2"/>
</dbReference>
<dbReference type="SUPFAM" id="SSF52540">
    <property type="entry name" value="P-loop containing nucleoside triphosphate hydrolases"/>
    <property type="match status" value="2"/>
</dbReference>
<dbReference type="PROSITE" id="PS00211">
    <property type="entry name" value="ABC_TRANSPORTER_1"/>
    <property type="match status" value="1"/>
</dbReference>
<dbReference type="PROSITE" id="PS50893">
    <property type="entry name" value="ABC_TRANSPORTER_2"/>
    <property type="match status" value="2"/>
</dbReference>
<dbReference type="PROSITE" id="PS51260">
    <property type="entry name" value="MGLA"/>
    <property type="match status" value="1"/>
</dbReference>
<sequence length="506" mass="56949">MADINTAQPRDWLLEMSNIDKSFPGVKALDNVNLKVRPYSIHALMGENGAGKSTLLKCLFGIYKKDSGSIIFQGQEIEFKSSKEALEQGVSMVHQELNLVLQRTVMDNMWLGRYPTKGFFVDQDKMYKETKAIFDELDIDIDPRDKVATLSVSQMQMIEIAKAFSYNAKIVIMDEPTSSLTEKEVNHLFTIIRKLKARGCGIVYISHKMEEIFQLCDEITILRDGQWITTQPLDGLTMDQIISMMVGRSLSQRFPDRLNKPGEVILEVKNLTSLRQPSIRDVSFDLHKGEILGIAGLVGAKRTDIVETLFGIREKVTGTIKLHGKNINNHSANEAINHGFALVTEERRSTGIYAYLDISFNSLISNIRNYKNKFGLLDNTRMKSDTQWVIDAMRVKTPGHRTNIGSLSGGNQQKVIIGRWLLTQPEILMLDEPTRGIDVGAKFEIYQLMTELAKKDKGIIIISSEMPELLGITDRILVMSNGQVAGIVDTKQTTQNEILRLASLHL</sequence>
<accession>Q1CGT1</accession>
<accession>C4GVF3</accession>
<proteinExistence type="inferred from homology"/>
<gene>
    <name evidence="1" type="primary">mglA</name>
    <name type="ordered locus">YPN_2471</name>
    <name type="ORF">YP516_2784</name>
</gene>
<protein>
    <recommendedName>
        <fullName evidence="1">Galactose/methyl galactoside import ATP-binding protein MglA</fullName>
        <ecNumber evidence="1">7.5.2.11</ecNumber>
    </recommendedName>
</protein>
<reference key="1">
    <citation type="journal article" date="2006" name="J. Bacteriol.">
        <title>Complete genome sequence of Yersinia pestis strains Antiqua and Nepal516: evidence of gene reduction in an emerging pathogen.</title>
        <authorList>
            <person name="Chain P.S.G."/>
            <person name="Hu P."/>
            <person name="Malfatti S.A."/>
            <person name="Radnedge L."/>
            <person name="Larimer F."/>
            <person name="Vergez L.M."/>
            <person name="Worsham P."/>
            <person name="Chu M.C."/>
            <person name="Andersen G.L."/>
        </authorList>
    </citation>
    <scope>NUCLEOTIDE SEQUENCE [LARGE SCALE GENOMIC DNA]</scope>
    <source>
        <strain>Nepal516</strain>
    </source>
</reference>
<reference key="2">
    <citation type="submission" date="2009-04" db="EMBL/GenBank/DDBJ databases">
        <title>Yersinia pestis Nepal516A whole genome shotgun sequencing project.</title>
        <authorList>
            <person name="Plunkett G. III"/>
            <person name="Anderson B.D."/>
            <person name="Baumler D.J."/>
            <person name="Burland V."/>
            <person name="Cabot E.L."/>
            <person name="Glasner J.D."/>
            <person name="Mau B."/>
            <person name="Neeno-Eckwall E."/>
            <person name="Perna N.T."/>
            <person name="Munk A.C."/>
            <person name="Tapia R."/>
            <person name="Green L.D."/>
            <person name="Rogers Y.C."/>
            <person name="Detter J.C."/>
            <person name="Bruce D.C."/>
            <person name="Brettin T.S."/>
        </authorList>
    </citation>
    <scope>NUCLEOTIDE SEQUENCE [LARGE SCALE GENOMIC DNA]</scope>
    <source>
        <strain>Nepal516</strain>
    </source>
</reference>
<keyword id="KW-0067">ATP-binding</keyword>
<keyword id="KW-0997">Cell inner membrane</keyword>
<keyword id="KW-1003">Cell membrane</keyword>
<keyword id="KW-0472">Membrane</keyword>
<keyword id="KW-0547">Nucleotide-binding</keyword>
<keyword id="KW-0677">Repeat</keyword>
<keyword id="KW-0762">Sugar transport</keyword>
<keyword id="KW-1278">Translocase</keyword>
<keyword id="KW-0813">Transport</keyword>
<name>MGLA_YERPN</name>